<feature type="chain" id="PRO_0000310388" description="Uncharacterized transcriptional regulatory protein PB1A11.04c">
    <location>
        <begin position="1"/>
        <end position="697"/>
    </location>
</feature>
<feature type="transmembrane region" description="Helical" evidence="1">
    <location>
        <begin position="500"/>
        <end position="520"/>
    </location>
</feature>
<feature type="DNA-binding region" description="Zn(2)-C6 fungal-type" evidence="2">
    <location>
        <begin position="24"/>
        <end position="51"/>
    </location>
</feature>
<name>YKN4_SCHPO</name>
<keyword id="KW-0238">DNA-binding</keyword>
<keyword id="KW-0472">Membrane</keyword>
<keyword id="KW-0479">Metal-binding</keyword>
<keyword id="KW-0539">Nucleus</keyword>
<keyword id="KW-1185">Reference proteome</keyword>
<keyword id="KW-0804">Transcription</keyword>
<keyword id="KW-0805">Transcription regulation</keyword>
<keyword id="KW-0812">Transmembrane</keyword>
<keyword id="KW-1133">Transmembrane helix</keyword>
<keyword id="KW-0862">Zinc</keyword>
<protein>
    <recommendedName>
        <fullName>Uncharacterized transcriptional regulatory protein PB1A11.04c</fullName>
    </recommendedName>
</protein>
<reference key="1">
    <citation type="journal article" date="2002" name="Nature">
        <title>The genome sequence of Schizosaccharomyces pombe.</title>
        <authorList>
            <person name="Wood V."/>
            <person name="Gwilliam R."/>
            <person name="Rajandream M.A."/>
            <person name="Lyne M.H."/>
            <person name="Lyne R."/>
            <person name="Stewart A."/>
            <person name="Sgouros J.G."/>
            <person name="Peat N."/>
            <person name="Hayles J."/>
            <person name="Baker S.G."/>
            <person name="Basham D."/>
            <person name="Bowman S."/>
            <person name="Brooks K."/>
            <person name="Brown D."/>
            <person name="Brown S."/>
            <person name="Chillingworth T."/>
            <person name="Churcher C.M."/>
            <person name="Collins M."/>
            <person name="Connor R."/>
            <person name="Cronin A."/>
            <person name="Davis P."/>
            <person name="Feltwell T."/>
            <person name="Fraser A."/>
            <person name="Gentles S."/>
            <person name="Goble A."/>
            <person name="Hamlin N."/>
            <person name="Harris D.E."/>
            <person name="Hidalgo J."/>
            <person name="Hodgson G."/>
            <person name="Holroyd S."/>
            <person name="Hornsby T."/>
            <person name="Howarth S."/>
            <person name="Huckle E.J."/>
            <person name="Hunt S."/>
            <person name="Jagels K."/>
            <person name="James K.D."/>
            <person name="Jones L."/>
            <person name="Jones M."/>
            <person name="Leather S."/>
            <person name="McDonald S."/>
            <person name="McLean J."/>
            <person name="Mooney P."/>
            <person name="Moule S."/>
            <person name="Mungall K.L."/>
            <person name="Murphy L.D."/>
            <person name="Niblett D."/>
            <person name="Odell C."/>
            <person name="Oliver K."/>
            <person name="O'Neil S."/>
            <person name="Pearson D."/>
            <person name="Quail M.A."/>
            <person name="Rabbinowitsch E."/>
            <person name="Rutherford K.M."/>
            <person name="Rutter S."/>
            <person name="Saunders D."/>
            <person name="Seeger K."/>
            <person name="Sharp S."/>
            <person name="Skelton J."/>
            <person name="Simmonds M.N."/>
            <person name="Squares R."/>
            <person name="Squares S."/>
            <person name="Stevens K."/>
            <person name="Taylor K."/>
            <person name="Taylor R.G."/>
            <person name="Tivey A."/>
            <person name="Walsh S.V."/>
            <person name="Warren T."/>
            <person name="Whitehead S."/>
            <person name="Woodward J.R."/>
            <person name="Volckaert G."/>
            <person name="Aert R."/>
            <person name="Robben J."/>
            <person name="Grymonprez B."/>
            <person name="Weltjens I."/>
            <person name="Vanstreels E."/>
            <person name="Rieger M."/>
            <person name="Schaefer M."/>
            <person name="Mueller-Auer S."/>
            <person name="Gabel C."/>
            <person name="Fuchs M."/>
            <person name="Duesterhoeft A."/>
            <person name="Fritzc C."/>
            <person name="Holzer E."/>
            <person name="Moestl D."/>
            <person name="Hilbert H."/>
            <person name="Borzym K."/>
            <person name="Langer I."/>
            <person name="Beck A."/>
            <person name="Lehrach H."/>
            <person name="Reinhardt R."/>
            <person name="Pohl T.M."/>
            <person name="Eger P."/>
            <person name="Zimmermann W."/>
            <person name="Wedler H."/>
            <person name="Wambutt R."/>
            <person name="Purnelle B."/>
            <person name="Goffeau A."/>
            <person name="Cadieu E."/>
            <person name="Dreano S."/>
            <person name="Gloux S."/>
            <person name="Lelaure V."/>
            <person name="Mottier S."/>
            <person name="Galibert F."/>
            <person name="Aves S.J."/>
            <person name="Xiang Z."/>
            <person name="Hunt C."/>
            <person name="Moore K."/>
            <person name="Hurst S.M."/>
            <person name="Lucas M."/>
            <person name="Rochet M."/>
            <person name="Gaillardin C."/>
            <person name="Tallada V.A."/>
            <person name="Garzon A."/>
            <person name="Thode G."/>
            <person name="Daga R.R."/>
            <person name="Cruzado L."/>
            <person name="Jimenez J."/>
            <person name="Sanchez M."/>
            <person name="del Rey F."/>
            <person name="Benito J."/>
            <person name="Dominguez A."/>
            <person name="Revuelta J.L."/>
            <person name="Moreno S."/>
            <person name="Armstrong J."/>
            <person name="Forsburg S.L."/>
            <person name="Cerutti L."/>
            <person name="Lowe T."/>
            <person name="McCombie W.R."/>
            <person name="Paulsen I."/>
            <person name="Potashkin J."/>
            <person name="Shpakovski G.V."/>
            <person name="Ussery D."/>
            <person name="Barrell B.G."/>
            <person name="Nurse P."/>
        </authorList>
    </citation>
    <scope>NUCLEOTIDE SEQUENCE [LARGE SCALE GENOMIC DNA]</scope>
    <source>
        <strain>972 / ATCC 24843</strain>
    </source>
</reference>
<proteinExistence type="inferred from homology"/>
<sequence>MIAAVEKDAVPRKRRVISQVSQACIRCRQKKIKCSGEKPSCQACSNNKVECIWPDRPNMRGKKPSSAARTLSPLTGIVQPYLGSHPFSPTILSPSSPNMDFTYSINSFGDYQKQLRLPTSRKLLQLWDIFLKTSYTELFGIFNKAQITSQIASDTAPPVLVLCICAHAARFSQEEVNRFKSSTAASDYYANQAFSLLPCRFQDISLTNITCLLLLCLIELGSCRGAKAWLLLGMALRMVDSLDLGNEINDNPLTMGSNTVSWTEAEQKRRVYWACFFVERLLSTGYMAPSKLRSLSLSLQKTSIQLPCPEPNFLFNQPILTELFDGSLPENTQSDTTSMAPYQRSLQLEFMTGSLIRLSNLWSEISRWALCGGYTKDITPPWLNQSQFHRSFELLKAWHENLPPRAVWSYTNYSAYSSPGESAGACYTFMHLLYHTTLTYLLRNVLDLFPEKSRQKSKLFSSVSQRFGQQPPTVWMDMILDQVITSADFITKLSKDPLNYIMSPFVGFSILTAATIHMLLKFCVVNIDQNYISSSRLVHVDHQILQDRSKYWKINQAMLVTLQRLYNFYRFQYLEEQSLYNFKIPGFPLCILEYGIVEDQSMKSNPDLNSFSKELFSRGTNELLNNGDDTQSGNSTPAMGVSEIRTDTILDEEVPVDPLITSILDDGRWWEEMFGSERKAGFKETVFEDMNGRSIRL</sequence>
<gene>
    <name type="ORF">SPAPB1A11.04c</name>
</gene>
<organism>
    <name type="scientific">Schizosaccharomyces pombe (strain 972 / ATCC 24843)</name>
    <name type="common">Fission yeast</name>
    <dbReference type="NCBI Taxonomy" id="284812"/>
    <lineage>
        <taxon>Eukaryota</taxon>
        <taxon>Fungi</taxon>
        <taxon>Dikarya</taxon>
        <taxon>Ascomycota</taxon>
        <taxon>Taphrinomycotina</taxon>
        <taxon>Schizosaccharomycetes</taxon>
        <taxon>Schizosaccharomycetales</taxon>
        <taxon>Schizosaccharomycetaceae</taxon>
        <taxon>Schizosaccharomyces</taxon>
    </lineage>
</organism>
<comment type="subcellular location">
    <subcellularLocation>
        <location evidence="2">Nucleus membrane</location>
        <topology evidence="3">Single-pass membrane protein</topology>
    </subcellularLocation>
</comment>
<dbReference type="EMBL" id="CU329670">
    <property type="protein sequence ID" value="CAC19729.1"/>
    <property type="molecule type" value="Genomic_DNA"/>
</dbReference>
<dbReference type="BioGRID" id="280017">
    <property type="interactions" value="36"/>
</dbReference>
<dbReference type="STRING" id="284812.Q9HDX1"/>
<dbReference type="SwissPalm" id="Q9HDX1"/>
<dbReference type="PaxDb" id="4896-SPAPB1A11.04c.1"/>
<dbReference type="EnsemblFungi" id="SPAPB1A11.04c.1">
    <property type="protein sequence ID" value="SPAPB1A11.04c.1:pep"/>
    <property type="gene ID" value="SPAPB1A11.04c"/>
</dbReference>
<dbReference type="KEGG" id="spo:2543602"/>
<dbReference type="PomBase" id="SPAPB1A11.04c"/>
<dbReference type="VEuPathDB" id="FungiDB:SPAPB1A11.04c"/>
<dbReference type="eggNOG" id="ENOG502QS5N">
    <property type="taxonomic scope" value="Eukaryota"/>
</dbReference>
<dbReference type="HOGENOM" id="CLU_029208_0_0_1"/>
<dbReference type="InParanoid" id="Q9HDX1"/>
<dbReference type="OMA" id="YFGWHAR"/>
<dbReference type="PhylomeDB" id="Q9HDX1"/>
<dbReference type="PRO" id="PR:Q9HDX1"/>
<dbReference type="Proteomes" id="UP000002485">
    <property type="component" value="Chromosome I"/>
</dbReference>
<dbReference type="GO" id="GO:0031965">
    <property type="term" value="C:nuclear membrane"/>
    <property type="evidence" value="ECO:0007669"/>
    <property type="project" value="UniProtKB-SubCell"/>
</dbReference>
<dbReference type="GO" id="GO:0005634">
    <property type="term" value="C:nucleus"/>
    <property type="evidence" value="ECO:0000255"/>
    <property type="project" value="PomBase"/>
</dbReference>
<dbReference type="GO" id="GO:0000981">
    <property type="term" value="F:DNA-binding transcription factor activity, RNA polymerase II-specific"/>
    <property type="evidence" value="ECO:0000255"/>
    <property type="project" value="PomBase"/>
</dbReference>
<dbReference type="GO" id="GO:0000978">
    <property type="term" value="F:RNA polymerase II cis-regulatory region sequence-specific DNA binding"/>
    <property type="evidence" value="ECO:0000255"/>
    <property type="project" value="PomBase"/>
</dbReference>
<dbReference type="GO" id="GO:0008270">
    <property type="term" value="F:zinc ion binding"/>
    <property type="evidence" value="ECO:0000255"/>
    <property type="project" value="PomBase"/>
</dbReference>
<dbReference type="GO" id="GO:0006351">
    <property type="term" value="P:DNA-templated transcription"/>
    <property type="evidence" value="ECO:0007669"/>
    <property type="project" value="InterPro"/>
</dbReference>
<dbReference type="GO" id="GO:0006357">
    <property type="term" value="P:regulation of transcription by RNA polymerase II"/>
    <property type="evidence" value="ECO:0000255"/>
    <property type="project" value="PomBase"/>
</dbReference>
<dbReference type="CDD" id="cd12148">
    <property type="entry name" value="fungal_TF_MHR"/>
    <property type="match status" value="1"/>
</dbReference>
<dbReference type="CDD" id="cd00067">
    <property type="entry name" value="GAL4"/>
    <property type="match status" value="1"/>
</dbReference>
<dbReference type="Gene3D" id="4.10.240.10">
    <property type="entry name" value="Zn(2)-C6 fungal-type DNA-binding domain"/>
    <property type="match status" value="1"/>
</dbReference>
<dbReference type="InterPro" id="IPR050815">
    <property type="entry name" value="TF_fung"/>
</dbReference>
<dbReference type="InterPro" id="IPR007219">
    <property type="entry name" value="Transcription_factor_dom_fun"/>
</dbReference>
<dbReference type="InterPro" id="IPR036864">
    <property type="entry name" value="Zn2-C6_fun-type_DNA-bd_sf"/>
</dbReference>
<dbReference type="InterPro" id="IPR001138">
    <property type="entry name" value="Zn2Cys6_DnaBD"/>
</dbReference>
<dbReference type="PANTHER" id="PTHR47338:SF25">
    <property type="entry name" value="TRANSCRIPTION FACTOR"/>
    <property type="match status" value="1"/>
</dbReference>
<dbReference type="PANTHER" id="PTHR47338">
    <property type="entry name" value="ZN(II)2CYS6 TRANSCRIPTION FACTOR (EUROFUNG)-RELATED"/>
    <property type="match status" value="1"/>
</dbReference>
<dbReference type="Pfam" id="PF04082">
    <property type="entry name" value="Fungal_trans"/>
    <property type="match status" value="1"/>
</dbReference>
<dbReference type="Pfam" id="PF00172">
    <property type="entry name" value="Zn_clus"/>
    <property type="match status" value="1"/>
</dbReference>
<dbReference type="SMART" id="SM00906">
    <property type="entry name" value="Fungal_trans"/>
    <property type="match status" value="1"/>
</dbReference>
<dbReference type="SMART" id="SM00066">
    <property type="entry name" value="GAL4"/>
    <property type="match status" value="1"/>
</dbReference>
<dbReference type="SUPFAM" id="SSF57701">
    <property type="entry name" value="Zn2/Cys6 DNA-binding domain"/>
    <property type="match status" value="1"/>
</dbReference>
<dbReference type="PROSITE" id="PS00463">
    <property type="entry name" value="ZN2_CY6_FUNGAL_1"/>
    <property type="match status" value="1"/>
</dbReference>
<dbReference type="PROSITE" id="PS50048">
    <property type="entry name" value="ZN2_CY6_FUNGAL_2"/>
    <property type="match status" value="1"/>
</dbReference>
<evidence type="ECO:0000255" key="1"/>
<evidence type="ECO:0000255" key="2">
    <source>
        <dbReference type="PROSITE-ProRule" id="PRU00227"/>
    </source>
</evidence>
<evidence type="ECO:0000305" key="3"/>
<accession>Q9HDX1</accession>